<keyword id="KW-0002">3D-structure</keyword>
<keyword id="KW-0067">ATP-binding</keyword>
<keyword id="KW-0418">Kinase</keyword>
<keyword id="KW-0547">Nucleotide-binding</keyword>
<keyword id="KW-0690">Ribosome biogenesis</keyword>
<keyword id="KW-0698">rRNA processing</keyword>
<keyword id="KW-0808">Transferase</keyword>
<evidence type="ECO:0000255" key="1">
    <source>
        <dbReference type="HAMAP-Rule" id="MF_00039"/>
    </source>
</evidence>
<evidence type="ECO:0000269" key="2">
    <source>
    </source>
</evidence>
<evidence type="ECO:0007744" key="3">
    <source>
        <dbReference type="PDB" id="4CVN"/>
    </source>
</evidence>
<evidence type="ECO:0007744" key="4">
    <source>
        <dbReference type="PDB" id="4CW7"/>
    </source>
</evidence>
<evidence type="ECO:0007829" key="5">
    <source>
        <dbReference type="PDB" id="4CVN"/>
    </source>
</evidence>
<proteinExistence type="evidence at protein level"/>
<sequence length="180" mass="20205">MLIAITGTPGVGKTTIAKLLAEKLGYEYVNLRDFALEKGCGREVDGEVEVEIDELAYFVEKELKDRNVVLDGHLSHLMPVDLVVVLRAHPRIIGERLRERGYSKEKIGENVEAELVDAILIEAIDEHENVIEVDTTNKTPEEIVEEIIGLIKSGVKRRVGIVDWSEVYDEIIPYLRLGGE</sequence>
<feature type="chain" id="PRO_0000153910" description="Putative adenylate kinase">
    <location>
        <begin position="1"/>
        <end position="180"/>
    </location>
</feature>
<feature type="region of interest" description="NMP" evidence="1">
    <location>
        <begin position="30"/>
        <end position="50"/>
    </location>
</feature>
<feature type="region of interest" description="LID" evidence="1">
    <location>
        <begin position="99"/>
        <end position="109"/>
    </location>
</feature>
<feature type="binding site" evidence="1 2 4">
    <location>
        <position position="10"/>
    </location>
    <ligand>
        <name>ATP</name>
        <dbReference type="ChEBI" id="CHEBI:30616"/>
    </ligand>
</feature>
<feature type="binding site" evidence="1 2 4">
    <location>
        <position position="12"/>
    </location>
    <ligand>
        <name>ATP</name>
        <dbReference type="ChEBI" id="CHEBI:30616"/>
    </ligand>
</feature>
<feature type="binding site" evidence="1 2 4">
    <location>
        <position position="13"/>
    </location>
    <ligand>
        <name>ATP</name>
        <dbReference type="ChEBI" id="CHEBI:30616"/>
    </ligand>
</feature>
<feature type="binding site" evidence="1 2 4">
    <location>
        <position position="14"/>
    </location>
    <ligand>
        <name>ATP</name>
        <dbReference type="ChEBI" id="CHEBI:30616"/>
    </ligand>
</feature>
<feature type="binding site" evidence="1 2 4">
    <location>
        <position position="15"/>
    </location>
    <ligand>
        <name>ATP</name>
        <dbReference type="ChEBI" id="CHEBI:30616"/>
    </ligand>
</feature>
<feature type="binding site" evidence="1 2 4">
    <location>
        <position position="100"/>
    </location>
    <ligand>
        <name>ATP</name>
        <dbReference type="ChEBI" id="CHEBI:30616"/>
    </ligand>
</feature>
<feature type="binding site" evidence="1 2 4">
    <location>
        <position position="138"/>
    </location>
    <ligand>
        <name>ATP</name>
        <dbReference type="ChEBI" id="CHEBI:30616"/>
    </ligand>
</feature>
<feature type="strand" evidence="5">
    <location>
        <begin position="1"/>
        <end position="6"/>
    </location>
</feature>
<feature type="helix" evidence="5">
    <location>
        <begin position="13"/>
        <end position="24"/>
    </location>
</feature>
<feature type="strand" evidence="5">
    <location>
        <begin position="27"/>
        <end position="30"/>
    </location>
</feature>
<feature type="helix" evidence="5">
    <location>
        <begin position="31"/>
        <end position="37"/>
    </location>
</feature>
<feature type="strand" evidence="5">
    <location>
        <begin position="42"/>
        <end position="44"/>
    </location>
</feature>
<feature type="strand" evidence="5">
    <location>
        <begin position="47"/>
        <end position="50"/>
    </location>
</feature>
<feature type="helix" evidence="5">
    <location>
        <begin position="52"/>
        <end position="62"/>
    </location>
</feature>
<feature type="turn" evidence="5">
    <location>
        <begin position="63"/>
        <end position="65"/>
    </location>
</feature>
<feature type="strand" evidence="5">
    <location>
        <begin position="66"/>
        <end position="72"/>
    </location>
</feature>
<feature type="helix" evidence="5">
    <location>
        <begin position="75"/>
        <end position="77"/>
    </location>
</feature>
<feature type="strand" evidence="5">
    <location>
        <begin position="81"/>
        <end position="87"/>
    </location>
</feature>
<feature type="helix" evidence="5">
    <location>
        <begin position="90"/>
        <end position="100"/>
    </location>
</feature>
<feature type="helix" evidence="5">
    <location>
        <begin position="104"/>
        <end position="115"/>
    </location>
</feature>
<feature type="helix" evidence="5">
    <location>
        <begin position="118"/>
        <end position="126"/>
    </location>
</feature>
<feature type="strand" evidence="5">
    <location>
        <begin position="130"/>
        <end position="134"/>
    </location>
</feature>
<feature type="helix" evidence="5">
    <location>
        <begin position="140"/>
        <end position="152"/>
    </location>
</feature>
<feature type="helix" evidence="5">
    <location>
        <begin position="164"/>
        <end position="167"/>
    </location>
</feature>
<feature type="helix" evidence="5">
    <location>
        <begin position="168"/>
        <end position="171"/>
    </location>
</feature>
<feature type="helix" evidence="5">
    <location>
        <begin position="172"/>
        <end position="174"/>
    </location>
</feature>
<accession>Q9UZK4</accession>
<accession>G8ZKB5</accession>
<organism>
    <name type="scientific">Pyrococcus abyssi (strain GE5 / Orsay)</name>
    <dbReference type="NCBI Taxonomy" id="272844"/>
    <lineage>
        <taxon>Archaea</taxon>
        <taxon>Methanobacteriati</taxon>
        <taxon>Methanobacteriota</taxon>
        <taxon>Thermococci</taxon>
        <taxon>Thermococcales</taxon>
        <taxon>Thermococcaceae</taxon>
        <taxon>Pyrococcus</taxon>
    </lineage>
</organism>
<comment type="function">
    <text evidence="1 2">Broad-specificity nucleoside monophosphate (NMP) kinase that catalyzes the reversible transfer of the terminal phosphate group between nucleoside triphosphates and monophosphates. Also has ATPase activity (PubMed:24823650). Involved in the late maturation steps of the 30S ribosomal particles, specifically 16S rRNA maturation (By similarity). While NMP activity is not required for ribosome maturation, ATPase activity is. Associates transiently with small ribosomal subunit protein uS11. ATP hydrolysis breaks the interaction with uS11. May temporarily remove uS11 from the ribosome to enable a conformational change of the ribosomal RNA that is needed for the final maturation step of the small ribosomal subunit (PubMed:24823650).</text>
</comment>
<comment type="catalytic activity">
    <reaction evidence="1">
        <text>AMP + ATP = 2 ADP</text>
        <dbReference type="Rhea" id="RHEA:12973"/>
        <dbReference type="ChEBI" id="CHEBI:30616"/>
        <dbReference type="ChEBI" id="CHEBI:456215"/>
        <dbReference type="ChEBI" id="CHEBI:456216"/>
        <dbReference type="EC" id="2.7.4.3"/>
    </reaction>
</comment>
<comment type="catalytic activity">
    <reaction evidence="1 2">
        <text>ATP + H2O = ADP + phosphate + H(+)</text>
        <dbReference type="Rhea" id="RHEA:13065"/>
        <dbReference type="ChEBI" id="CHEBI:15377"/>
        <dbReference type="ChEBI" id="CHEBI:15378"/>
        <dbReference type="ChEBI" id="CHEBI:30616"/>
        <dbReference type="ChEBI" id="CHEBI:43474"/>
        <dbReference type="ChEBI" id="CHEBI:456216"/>
    </reaction>
</comment>
<comment type="subunit">
    <text evidence="1 2">Interacts with uS11. Not a structural component of 40S pre-ribosomes, but transiently interacts with them by binding to uS11.</text>
</comment>
<comment type="similarity">
    <text evidence="1">Belongs to the adenylate kinase family. AK6 subfamily.</text>
</comment>
<name>KAD6_PYRAB</name>
<dbReference type="EC" id="2.7.4.3" evidence="1"/>
<dbReference type="EMBL" id="AJ248286">
    <property type="protein sequence ID" value="CAB50053.1"/>
    <property type="molecule type" value="Genomic_DNA"/>
</dbReference>
<dbReference type="EMBL" id="HE613800">
    <property type="protein sequence ID" value="CCE70558.1"/>
    <property type="molecule type" value="Genomic_DNA"/>
</dbReference>
<dbReference type="PIR" id="H75093">
    <property type="entry name" value="H75093"/>
</dbReference>
<dbReference type="RefSeq" id="WP_010868259.1">
    <property type="nucleotide sequence ID" value="NC_000868.1"/>
</dbReference>
<dbReference type="PDB" id="4CVN">
    <property type="method" value="X-ray"/>
    <property type="resolution" value="2.12 A"/>
    <property type="chains" value="A/B/C/D=1-180"/>
</dbReference>
<dbReference type="PDB" id="4CW7">
    <property type="method" value="X-ray"/>
    <property type="resolution" value="2.46 A"/>
    <property type="chains" value="A/C/E/G=1-180"/>
</dbReference>
<dbReference type="PDBsum" id="4CVN"/>
<dbReference type="PDBsum" id="4CW7"/>
<dbReference type="SMR" id="Q9UZK4"/>
<dbReference type="STRING" id="272844.PAB0757"/>
<dbReference type="KEGG" id="pab:PAB0757"/>
<dbReference type="PATRIC" id="fig|272844.11.peg.1199"/>
<dbReference type="eggNOG" id="arCOG01038">
    <property type="taxonomic scope" value="Archaea"/>
</dbReference>
<dbReference type="HOGENOM" id="CLU_079096_0_1_2"/>
<dbReference type="OrthoDB" id="8730at2157"/>
<dbReference type="PhylomeDB" id="Q9UZK4"/>
<dbReference type="EvolutionaryTrace" id="Q9UZK4"/>
<dbReference type="Proteomes" id="UP000000810">
    <property type="component" value="Chromosome"/>
</dbReference>
<dbReference type="Proteomes" id="UP000009139">
    <property type="component" value="Chromosome"/>
</dbReference>
<dbReference type="GO" id="GO:0004017">
    <property type="term" value="F:adenylate kinase activity"/>
    <property type="evidence" value="ECO:0007669"/>
    <property type="project" value="UniProtKB-UniRule"/>
</dbReference>
<dbReference type="GO" id="GO:0005524">
    <property type="term" value="F:ATP binding"/>
    <property type="evidence" value="ECO:0007669"/>
    <property type="project" value="UniProtKB-UniRule"/>
</dbReference>
<dbReference type="GO" id="GO:0016887">
    <property type="term" value="F:ATP hydrolysis activity"/>
    <property type="evidence" value="ECO:0007669"/>
    <property type="project" value="InterPro"/>
</dbReference>
<dbReference type="GO" id="GO:0042274">
    <property type="term" value="P:ribosomal small subunit biogenesis"/>
    <property type="evidence" value="ECO:0007669"/>
    <property type="project" value="UniProtKB-UniRule"/>
</dbReference>
<dbReference type="GO" id="GO:0006364">
    <property type="term" value="P:rRNA processing"/>
    <property type="evidence" value="ECO:0007669"/>
    <property type="project" value="UniProtKB-KW"/>
</dbReference>
<dbReference type="Gene3D" id="3.40.50.300">
    <property type="entry name" value="P-loop containing nucleotide triphosphate hydrolases"/>
    <property type="match status" value="1"/>
</dbReference>
<dbReference type="HAMAP" id="MF_00039">
    <property type="entry name" value="Adenylate_kinase_AK6"/>
    <property type="match status" value="1"/>
</dbReference>
<dbReference type="InterPro" id="IPR020618">
    <property type="entry name" value="Adenyl_kinase_AK6"/>
</dbReference>
<dbReference type="InterPro" id="IPR027417">
    <property type="entry name" value="P-loop_NTPase"/>
</dbReference>
<dbReference type="NCBIfam" id="NF003012">
    <property type="entry name" value="PRK03839.1"/>
    <property type="match status" value="1"/>
</dbReference>
<dbReference type="PANTHER" id="PTHR12595:SF0">
    <property type="entry name" value="ADENYLATE KINASE ISOENZYME 6"/>
    <property type="match status" value="1"/>
</dbReference>
<dbReference type="PANTHER" id="PTHR12595">
    <property type="entry name" value="POS9-ACTIVATING FACTOR FAP7-RELATED"/>
    <property type="match status" value="1"/>
</dbReference>
<dbReference type="Pfam" id="PF13238">
    <property type="entry name" value="AAA_18"/>
    <property type="match status" value="1"/>
</dbReference>
<dbReference type="SUPFAM" id="SSF52540">
    <property type="entry name" value="P-loop containing nucleoside triphosphate hydrolases"/>
    <property type="match status" value="1"/>
</dbReference>
<reference key="1">
    <citation type="journal article" date="2003" name="Mol. Microbiol.">
        <title>An integrated analysis of the genome of the hyperthermophilic archaeon Pyrococcus abyssi.</title>
        <authorList>
            <person name="Cohen G.N."/>
            <person name="Barbe V."/>
            <person name="Flament D."/>
            <person name="Galperin M."/>
            <person name="Heilig R."/>
            <person name="Lecompte O."/>
            <person name="Poch O."/>
            <person name="Prieur D."/>
            <person name="Querellou J."/>
            <person name="Ripp R."/>
            <person name="Thierry J.-C."/>
            <person name="Van der Oost J."/>
            <person name="Weissenbach J."/>
            <person name="Zivanovic Y."/>
            <person name="Forterre P."/>
        </authorList>
    </citation>
    <scope>NUCLEOTIDE SEQUENCE [LARGE SCALE GENOMIC DNA]</scope>
    <source>
        <strain>GE5 / Orsay</strain>
    </source>
</reference>
<reference key="2">
    <citation type="journal article" date="2012" name="Curr. Microbiol.">
        <title>Re-annotation of two hyperthermophilic archaea Pyrococcus abyssi GE5 and Pyrococcus furiosus DSM 3638.</title>
        <authorList>
            <person name="Gao J."/>
            <person name="Wang J."/>
        </authorList>
    </citation>
    <scope>GENOME REANNOTATION</scope>
    <source>
        <strain>GE5 / Orsay</strain>
    </source>
</reference>
<reference evidence="3 4" key="3">
    <citation type="journal article" date="2014" name="PLoS Biol.">
        <title>RNA mimicry by the Fap7 adenylate kinase in ribosome biogenesis.</title>
        <authorList>
            <person name="Loc'h J."/>
            <person name="Blaud M."/>
            <person name="Rety S."/>
            <person name="Lebaron S."/>
            <person name="Deschamps P."/>
            <person name="Bareille J."/>
            <person name="Jombart J."/>
            <person name="Robert-Paganin J."/>
            <person name="Delbos L."/>
            <person name="Chardon F."/>
            <person name="Zhang E."/>
            <person name="Charenton C."/>
            <person name="Tollervey D."/>
            <person name="Leulliot N."/>
        </authorList>
    </citation>
    <scope>X-RAY CRYSTALLOGRAPHY (2.12 ANGSTROMS) IN COMPLEX WITH ATP</scope>
    <scope>FUNCTION</scope>
    <scope>CATALYTIC ACTIVITY</scope>
    <scope>SUBUNIT</scope>
</reference>
<gene>
    <name type="ordered locus">PYRAB11420</name>
    <name type="ORF">PAB0757</name>
</gene>
<protein>
    <recommendedName>
        <fullName evidence="1">Putative adenylate kinase</fullName>
        <shortName evidence="1">AK</shortName>
        <ecNumber evidence="1">2.7.4.3</ecNumber>
    </recommendedName>
    <alternativeName>
        <fullName evidence="1">ATP-AMP transphosphorylase</fullName>
    </alternativeName>
</protein>